<evidence type="ECO:0000255" key="1">
    <source>
        <dbReference type="HAMAP-Rule" id="MF_01365"/>
    </source>
</evidence>
<evidence type="ECO:0000305" key="2"/>
<feature type="chain" id="PRO_0000260989" description="Large ribosomal subunit protein uL6">
    <location>
        <begin position="1"/>
        <end position="176"/>
    </location>
</feature>
<keyword id="KW-0687">Ribonucleoprotein</keyword>
<keyword id="KW-0689">Ribosomal protein</keyword>
<keyword id="KW-0694">RNA-binding</keyword>
<keyword id="KW-0699">rRNA-binding</keyword>
<protein>
    <recommendedName>
        <fullName evidence="1">Large ribosomal subunit protein uL6</fullName>
    </recommendedName>
    <alternativeName>
        <fullName evidence="2">50S ribosomal protein L6</fullName>
    </alternativeName>
</protein>
<name>RL6_METMA</name>
<organism>
    <name type="scientific">Methanosarcina mazei (strain ATCC BAA-159 / DSM 3647 / Goe1 / Go1 / JCM 11833 / OCM 88)</name>
    <name type="common">Methanosarcina frisia</name>
    <dbReference type="NCBI Taxonomy" id="192952"/>
    <lineage>
        <taxon>Archaea</taxon>
        <taxon>Methanobacteriati</taxon>
        <taxon>Methanobacteriota</taxon>
        <taxon>Stenosarchaea group</taxon>
        <taxon>Methanomicrobia</taxon>
        <taxon>Methanosarcinales</taxon>
        <taxon>Methanosarcinaceae</taxon>
        <taxon>Methanosarcina</taxon>
    </lineage>
</organism>
<reference key="1">
    <citation type="journal article" date="2002" name="J. Mol. Microbiol. Biotechnol.">
        <title>The genome of Methanosarcina mazei: evidence for lateral gene transfer between Bacteria and Archaea.</title>
        <authorList>
            <person name="Deppenmeier U."/>
            <person name="Johann A."/>
            <person name="Hartsch T."/>
            <person name="Merkl R."/>
            <person name="Schmitz R.A."/>
            <person name="Martinez-Arias R."/>
            <person name="Henne A."/>
            <person name="Wiezer A."/>
            <person name="Baeumer S."/>
            <person name="Jacobi C."/>
            <person name="Brueggemann H."/>
            <person name="Lienard T."/>
            <person name="Christmann A."/>
            <person name="Boemecke M."/>
            <person name="Steckel S."/>
            <person name="Bhattacharyya A."/>
            <person name="Lykidis A."/>
            <person name="Overbeek R."/>
            <person name="Klenk H.-P."/>
            <person name="Gunsalus R.P."/>
            <person name="Fritz H.-J."/>
            <person name="Gottschalk G."/>
        </authorList>
    </citation>
    <scope>NUCLEOTIDE SEQUENCE [LARGE SCALE GENOMIC DNA]</scope>
    <source>
        <strain>ATCC BAA-159 / DSM 3647 / Goe1 / Go1 / JCM 11833 / OCM 88</strain>
    </source>
</reference>
<comment type="function">
    <text evidence="1">This protein binds to the 23S rRNA, and is important in its secondary structure. It is located near the subunit interface in the base of the L7/L12 stalk, and near the tRNA binding site of the peptidyltransferase center.</text>
</comment>
<comment type="subunit">
    <text evidence="1">Part of the 50S ribosomal subunit.</text>
</comment>
<comment type="similarity">
    <text evidence="1">Belongs to the universal ribosomal protein uL6 family.</text>
</comment>
<sequence>MVKEIARTIEIPEGVSVSLSQDVFTAKGPKGTVERTFWYPGIKIEVREGEVVVDAESSRKEQKAMVGTFASHLKNLIIGVSEGFECKMNIVYAHFPMQVKVEGKTLVIGNFLGEKKPRIAKILGETKVKVSGNEIVVSGINKEDVGQTAANIEQKTKIKRFDPRIFQDGIYIVQKA</sequence>
<dbReference type="EMBL" id="AE008384">
    <property type="protein sequence ID" value="AAM31836.1"/>
    <property type="molecule type" value="Genomic_DNA"/>
</dbReference>
<dbReference type="RefSeq" id="WP_011034071.1">
    <property type="nucleotide sequence ID" value="NC_003901.1"/>
</dbReference>
<dbReference type="SMR" id="Q8PV34"/>
<dbReference type="KEGG" id="mma:MM_2140"/>
<dbReference type="PATRIC" id="fig|192952.21.peg.2454"/>
<dbReference type="eggNOG" id="arCOG04090">
    <property type="taxonomic scope" value="Archaea"/>
</dbReference>
<dbReference type="HOGENOM" id="CLU_065464_0_0_2"/>
<dbReference type="Proteomes" id="UP000000595">
    <property type="component" value="Chromosome"/>
</dbReference>
<dbReference type="GO" id="GO:0022625">
    <property type="term" value="C:cytosolic large ribosomal subunit"/>
    <property type="evidence" value="ECO:0007669"/>
    <property type="project" value="TreeGrafter"/>
</dbReference>
<dbReference type="GO" id="GO:0019843">
    <property type="term" value="F:rRNA binding"/>
    <property type="evidence" value="ECO:0007669"/>
    <property type="project" value="UniProtKB-UniRule"/>
</dbReference>
<dbReference type="GO" id="GO:0003735">
    <property type="term" value="F:structural constituent of ribosome"/>
    <property type="evidence" value="ECO:0007669"/>
    <property type="project" value="InterPro"/>
</dbReference>
<dbReference type="GO" id="GO:0002181">
    <property type="term" value="P:cytoplasmic translation"/>
    <property type="evidence" value="ECO:0007669"/>
    <property type="project" value="TreeGrafter"/>
</dbReference>
<dbReference type="FunFam" id="3.90.930.12:FF:000008">
    <property type="entry name" value="50S ribosomal protein L6"/>
    <property type="match status" value="1"/>
</dbReference>
<dbReference type="Gene3D" id="3.90.930.12">
    <property type="entry name" value="Ribosomal protein L6, alpha-beta domain"/>
    <property type="match status" value="2"/>
</dbReference>
<dbReference type="HAMAP" id="MF_01365_A">
    <property type="entry name" value="Ribosomal_uL6_A"/>
    <property type="match status" value="1"/>
</dbReference>
<dbReference type="InterPro" id="IPR000702">
    <property type="entry name" value="Ribosomal_uL6-like"/>
</dbReference>
<dbReference type="InterPro" id="IPR036789">
    <property type="entry name" value="Ribosomal_uL6-like_a/b-dom_sf"/>
</dbReference>
<dbReference type="InterPro" id="IPR020040">
    <property type="entry name" value="Ribosomal_uL6_a/b-dom"/>
</dbReference>
<dbReference type="InterPro" id="IPR019907">
    <property type="entry name" value="Ribosomal_uL6_arc"/>
</dbReference>
<dbReference type="InterPro" id="IPR002359">
    <property type="entry name" value="Ribosomal_uL6_CS2"/>
</dbReference>
<dbReference type="NCBIfam" id="NF004037">
    <property type="entry name" value="PRK05518.1"/>
    <property type="match status" value="1"/>
</dbReference>
<dbReference type="NCBIfam" id="TIGR03653">
    <property type="entry name" value="uL6_arch"/>
    <property type="match status" value="1"/>
</dbReference>
<dbReference type="PANTHER" id="PTHR11655:SF16">
    <property type="entry name" value="60S RIBOSOMAL PROTEIN L9"/>
    <property type="match status" value="1"/>
</dbReference>
<dbReference type="PANTHER" id="PTHR11655">
    <property type="entry name" value="60S/50S RIBOSOMAL PROTEIN L6/L9"/>
    <property type="match status" value="1"/>
</dbReference>
<dbReference type="Pfam" id="PF00347">
    <property type="entry name" value="Ribosomal_L6"/>
    <property type="match status" value="2"/>
</dbReference>
<dbReference type="PIRSF" id="PIRSF002162">
    <property type="entry name" value="Ribosomal_L6"/>
    <property type="match status" value="1"/>
</dbReference>
<dbReference type="SUPFAM" id="SSF56053">
    <property type="entry name" value="Ribosomal protein L6"/>
    <property type="match status" value="2"/>
</dbReference>
<dbReference type="PROSITE" id="PS00700">
    <property type="entry name" value="RIBOSOMAL_L6_2"/>
    <property type="match status" value="1"/>
</dbReference>
<accession>Q8PV34</accession>
<proteinExistence type="inferred from homology"/>
<gene>
    <name evidence="1" type="primary">rpl6</name>
    <name type="ordered locus">MM_2140</name>
</gene>